<reference key="1">
    <citation type="journal article" date="2006" name="Mol. Genet. Genomics">
        <title>The chloroplast genome of Nicotiana sylvestris and Nicotiana tomentosiformis: complete sequencing confirms that the Nicotiana sylvestris progenitor is the maternal genome donor of Nicotiana tabacum.</title>
        <authorList>
            <person name="Yukawa M."/>
            <person name="Tsudzuki T."/>
            <person name="Sugiura M."/>
        </authorList>
    </citation>
    <scope>NUCLEOTIDE SEQUENCE [LARGE SCALE GENOMIC DNA]</scope>
</reference>
<name>RK22_NICTO</name>
<protein>
    <recommendedName>
        <fullName evidence="2">Large ribosomal subunit protein uL22c</fullName>
    </recommendedName>
    <alternativeName>
        <fullName>50S ribosomal protein L22, chloroplastic</fullName>
    </alternativeName>
</protein>
<geneLocation type="chloroplast"/>
<dbReference type="EMBL" id="AB240139">
    <property type="protein sequence ID" value="BAE48043.1"/>
    <property type="molecule type" value="Genomic_DNA"/>
</dbReference>
<dbReference type="RefSeq" id="YP_398904.1">
    <property type="nucleotide sequence ID" value="NC_007602.1"/>
</dbReference>
<dbReference type="SMR" id="Q33BZ2"/>
<dbReference type="GeneID" id="3776294"/>
<dbReference type="KEGG" id="nto:3776294"/>
<dbReference type="OrthoDB" id="1840754at2759"/>
<dbReference type="GO" id="GO:0009507">
    <property type="term" value="C:chloroplast"/>
    <property type="evidence" value="ECO:0007669"/>
    <property type="project" value="UniProtKB-SubCell"/>
</dbReference>
<dbReference type="GO" id="GO:0015934">
    <property type="term" value="C:large ribosomal subunit"/>
    <property type="evidence" value="ECO:0007669"/>
    <property type="project" value="InterPro"/>
</dbReference>
<dbReference type="GO" id="GO:0019843">
    <property type="term" value="F:rRNA binding"/>
    <property type="evidence" value="ECO:0007669"/>
    <property type="project" value="UniProtKB-UniRule"/>
</dbReference>
<dbReference type="GO" id="GO:0003735">
    <property type="term" value="F:structural constituent of ribosome"/>
    <property type="evidence" value="ECO:0007669"/>
    <property type="project" value="InterPro"/>
</dbReference>
<dbReference type="GO" id="GO:0006412">
    <property type="term" value="P:translation"/>
    <property type="evidence" value="ECO:0007669"/>
    <property type="project" value="UniProtKB-UniRule"/>
</dbReference>
<dbReference type="CDD" id="cd00336">
    <property type="entry name" value="Ribosomal_L22"/>
    <property type="match status" value="1"/>
</dbReference>
<dbReference type="FunFam" id="3.90.470.10:FF:000006">
    <property type="entry name" value="50S ribosomal protein L22, chloroplastic"/>
    <property type="match status" value="1"/>
</dbReference>
<dbReference type="Gene3D" id="3.90.470.10">
    <property type="entry name" value="Ribosomal protein L22/L17"/>
    <property type="match status" value="1"/>
</dbReference>
<dbReference type="HAMAP" id="MF_01331_B">
    <property type="entry name" value="Ribosomal_uL22_B"/>
    <property type="match status" value="1"/>
</dbReference>
<dbReference type="InterPro" id="IPR001063">
    <property type="entry name" value="Ribosomal_uL22"/>
</dbReference>
<dbReference type="InterPro" id="IPR005727">
    <property type="entry name" value="Ribosomal_uL22_bac/chlpt-type"/>
</dbReference>
<dbReference type="InterPro" id="IPR047867">
    <property type="entry name" value="Ribosomal_uL22_bac/org-type"/>
</dbReference>
<dbReference type="InterPro" id="IPR018260">
    <property type="entry name" value="Ribosomal_uL22_CS"/>
</dbReference>
<dbReference type="InterPro" id="IPR036394">
    <property type="entry name" value="Ribosomal_uL22_sf"/>
</dbReference>
<dbReference type="NCBIfam" id="TIGR01044">
    <property type="entry name" value="rplV_bact"/>
    <property type="match status" value="1"/>
</dbReference>
<dbReference type="PANTHER" id="PTHR13501">
    <property type="entry name" value="CHLOROPLAST 50S RIBOSOMAL PROTEIN L22-RELATED"/>
    <property type="match status" value="1"/>
</dbReference>
<dbReference type="PANTHER" id="PTHR13501:SF10">
    <property type="entry name" value="LARGE RIBOSOMAL SUBUNIT PROTEIN UL22M"/>
    <property type="match status" value="1"/>
</dbReference>
<dbReference type="Pfam" id="PF00237">
    <property type="entry name" value="Ribosomal_L22"/>
    <property type="match status" value="1"/>
</dbReference>
<dbReference type="SUPFAM" id="SSF54843">
    <property type="entry name" value="Ribosomal protein L22"/>
    <property type="match status" value="1"/>
</dbReference>
<dbReference type="PROSITE" id="PS00464">
    <property type="entry name" value="RIBOSOMAL_L22"/>
    <property type="match status" value="1"/>
</dbReference>
<feature type="chain" id="PRO_0000243242" description="Large ribosomal subunit protein uL22c">
    <location>
        <begin position="1"/>
        <end position="155"/>
    </location>
</feature>
<proteinExistence type="inferred from homology"/>
<organism>
    <name type="scientific">Nicotiana tomentosiformis</name>
    <name type="common">Tobacco</name>
    <dbReference type="NCBI Taxonomy" id="4098"/>
    <lineage>
        <taxon>Eukaryota</taxon>
        <taxon>Viridiplantae</taxon>
        <taxon>Streptophyta</taxon>
        <taxon>Embryophyta</taxon>
        <taxon>Tracheophyta</taxon>
        <taxon>Spermatophyta</taxon>
        <taxon>Magnoliopsida</taxon>
        <taxon>eudicotyledons</taxon>
        <taxon>Gunneridae</taxon>
        <taxon>Pentapetalae</taxon>
        <taxon>asterids</taxon>
        <taxon>lamiids</taxon>
        <taxon>Solanales</taxon>
        <taxon>Solanaceae</taxon>
        <taxon>Nicotianoideae</taxon>
        <taxon>Nicotianeae</taxon>
        <taxon>Nicotiana</taxon>
    </lineage>
</organism>
<keyword id="KW-0150">Chloroplast</keyword>
<keyword id="KW-0934">Plastid</keyword>
<keyword id="KW-0687">Ribonucleoprotein</keyword>
<keyword id="KW-0689">Ribosomal protein</keyword>
<keyword id="KW-0694">RNA-binding</keyword>
<keyword id="KW-0699">rRNA-binding</keyword>
<sequence length="155" mass="17766">MLKKKKTEVYALGEHISMSADKARRVIDQIRGRSYEETLMILELMPYRACYPILKLVYSAAANASYNMGSSEANLVISKAEVNGGTTVKKLKPRARGRSFPIKRSTCHITIVMKDISLDDEYVEMYSLKKTRWKKKPTAMPYRDMYNSGGLWDKK</sequence>
<accession>Q33BZ2</accession>
<gene>
    <name type="primary">rpl22</name>
</gene>
<comment type="function">
    <text evidence="1">This protein binds specifically to 23S rRNA.</text>
</comment>
<comment type="function">
    <text evidence="1">The globular domain of the protein is located near the polypeptide exit tunnel on the outside of the subunit, while an extended beta-hairpin is found that lines the wall of the exit tunnel in the center of the 70S ribosome.</text>
</comment>
<comment type="subunit">
    <text evidence="1">Part of the 50S ribosomal subunit.</text>
</comment>
<comment type="subcellular location">
    <subcellularLocation>
        <location>Plastid</location>
        <location>Chloroplast</location>
    </subcellularLocation>
</comment>
<comment type="similarity">
    <text evidence="2">Belongs to the universal ribosomal protein uL22 family.</text>
</comment>
<evidence type="ECO:0000250" key="1"/>
<evidence type="ECO:0000305" key="2"/>